<comment type="function">
    <text evidence="1">Catalyzes the folate-dependent formation of 5-methyl-uridine at position 54 (M-5-U54) in all tRNAs.</text>
</comment>
<comment type="catalytic activity">
    <reaction evidence="1">
        <text>uridine(54) in tRNA + (6R)-5,10-methylene-5,6,7,8-tetrahydrofolate + NADH + H(+) = 5-methyluridine(54) in tRNA + (6S)-5,6,7,8-tetrahydrofolate + NAD(+)</text>
        <dbReference type="Rhea" id="RHEA:16873"/>
        <dbReference type="Rhea" id="RHEA-COMP:10167"/>
        <dbReference type="Rhea" id="RHEA-COMP:10193"/>
        <dbReference type="ChEBI" id="CHEBI:15378"/>
        <dbReference type="ChEBI" id="CHEBI:15636"/>
        <dbReference type="ChEBI" id="CHEBI:57453"/>
        <dbReference type="ChEBI" id="CHEBI:57540"/>
        <dbReference type="ChEBI" id="CHEBI:57945"/>
        <dbReference type="ChEBI" id="CHEBI:65315"/>
        <dbReference type="ChEBI" id="CHEBI:74447"/>
        <dbReference type="EC" id="2.1.1.74"/>
    </reaction>
</comment>
<comment type="catalytic activity">
    <reaction evidence="1">
        <text>uridine(54) in tRNA + (6R)-5,10-methylene-5,6,7,8-tetrahydrofolate + NADPH + H(+) = 5-methyluridine(54) in tRNA + (6S)-5,6,7,8-tetrahydrofolate + NADP(+)</text>
        <dbReference type="Rhea" id="RHEA:62372"/>
        <dbReference type="Rhea" id="RHEA-COMP:10167"/>
        <dbReference type="Rhea" id="RHEA-COMP:10193"/>
        <dbReference type="ChEBI" id="CHEBI:15378"/>
        <dbReference type="ChEBI" id="CHEBI:15636"/>
        <dbReference type="ChEBI" id="CHEBI:57453"/>
        <dbReference type="ChEBI" id="CHEBI:57783"/>
        <dbReference type="ChEBI" id="CHEBI:58349"/>
        <dbReference type="ChEBI" id="CHEBI:65315"/>
        <dbReference type="ChEBI" id="CHEBI:74447"/>
        <dbReference type="EC" id="2.1.1.74"/>
    </reaction>
</comment>
<comment type="cofactor">
    <cofactor evidence="1">
        <name>FAD</name>
        <dbReference type="ChEBI" id="CHEBI:57692"/>
    </cofactor>
</comment>
<comment type="subcellular location">
    <subcellularLocation>
        <location evidence="1">Cytoplasm</location>
    </subcellularLocation>
</comment>
<comment type="similarity">
    <text evidence="1">Belongs to the MnmG family. TrmFO subfamily.</text>
</comment>
<proteinExistence type="inferred from homology"/>
<reference key="1">
    <citation type="journal article" date="2004" name="Nucleic Acids Res.">
        <title>Genome sequence of Symbiobacterium thermophilum, an uncultivable bacterium that depends on microbial commensalism.</title>
        <authorList>
            <person name="Ueda K."/>
            <person name="Yamashita A."/>
            <person name="Ishikawa J."/>
            <person name="Shimada M."/>
            <person name="Watsuji T."/>
            <person name="Morimura K."/>
            <person name="Ikeda H."/>
            <person name="Hattori M."/>
            <person name="Beppu T."/>
        </authorList>
    </citation>
    <scope>NUCLEOTIDE SEQUENCE [LARGE SCALE GENOMIC DNA]</scope>
    <source>
        <strain>DSM 24528 / JCM 14929 / IAM 14863 / T</strain>
    </source>
</reference>
<name>TRMFO_SYMTH</name>
<keyword id="KW-0963">Cytoplasm</keyword>
<keyword id="KW-0274">FAD</keyword>
<keyword id="KW-0285">Flavoprotein</keyword>
<keyword id="KW-0489">Methyltransferase</keyword>
<keyword id="KW-0520">NAD</keyword>
<keyword id="KW-0521">NADP</keyword>
<keyword id="KW-1185">Reference proteome</keyword>
<keyword id="KW-0808">Transferase</keyword>
<keyword id="KW-0819">tRNA processing</keyword>
<protein>
    <recommendedName>
        <fullName evidence="1">Methylenetetrahydrofolate--tRNA-(uracil-5-)-methyltransferase TrmFO</fullName>
        <ecNumber evidence="1">2.1.1.74</ecNumber>
    </recommendedName>
    <alternativeName>
        <fullName evidence="1">Folate-dependent tRNA (uracil-5-)-methyltransferase</fullName>
    </alternativeName>
    <alternativeName>
        <fullName evidence="1">Folate-dependent tRNA(M-5-U54)-methyltransferase</fullName>
    </alternativeName>
</protein>
<sequence>MTEPHVTVIGAGLAGSEAAWQAARLGVKVTLYEMRPHVTTAVHRTGLFAELVCSNSLRGAGLENAVGLLKEEMRRLGSLILREALQHAVPAGGALAVSREEFAAGVTAALTSHPNITVVREEVREIPPDGVVVIASGPLTSAPLAEAIRRFTGEESLAFYDAAAPIVNIETVNMDKVFRMSRYGKGEGDDYLNCPLTREEYEAFYEALVTAEKAMPHNPEDAQVCFFEGCLPVEEIARRGPDALRYGPMKPVGLIDPRTGRRPWAVVQLRQDNAAGTLYNMVGFQTSLKWSEQKRVFRMIPGLEEAEFERYGVIHRNTFMKSPRLLYPTGESRQRAGLFFAGQMTGVEGYVESAAGGLVAGINAARRALGLEPVTFPRETAIGSLLHYITHADPEHFQPMNIAFGLMPPLEGPKIRDKRARKRAISERALDVLAAWAPGHLGAPLLD</sequence>
<gene>
    <name evidence="1" type="primary">trmFO</name>
    <name type="synonym">gid</name>
    <name type="ordered locus">STH1482</name>
</gene>
<feature type="chain" id="PRO_0000117280" description="Methylenetetrahydrofolate--tRNA-(uracil-5-)-methyltransferase TrmFO">
    <location>
        <begin position="1"/>
        <end position="447"/>
    </location>
</feature>
<feature type="binding site" evidence="1">
    <location>
        <begin position="10"/>
        <end position="15"/>
    </location>
    <ligand>
        <name>FAD</name>
        <dbReference type="ChEBI" id="CHEBI:57692"/>
    </ligand>
</feature>
<accession>Q67PC6</accession>
<organism>
    <name type="scientific">Symbiobacterium thermophilum (strain DSM 24528 / JCM 14929 / IAM 14863 / T)</name>
    <dbReference type="NCBI Taxonomy" id="292459"/>
    <lineage>
        <taxon>Bacteria</taxon>
        <taxon>Bacillati</taxon>
        <taxon>Bacillota</taxon>
        <taxon>Clostridia</taxon>
        <taxon>Eubacteriales</taxon>
        <taxon>Symbiobacteriaceae</taxon>
        <taxon>Symbiobacterium</taxon>
    </lineage>
</organism>
<dbReference type="EC" id="2.1.1.74" evidence="1"/>
<dbReference type="EMBL" id="AP006840">
    <property type="protein sequence ID" value="BAD40467.1"/>
    <property type="molecule type" value="Genomic_DNA"/>
</dbReference>
<dbReference type="RefSeq" id="WP_011195612.1">
    <property type="nucleotide sequence ID" value="NC_006177.1"/>
</dbReference>
<dbReference type="SMR" id="Q67PC6"/>
<dbReference type="STRING" id="292459.STH1482"/>
<dbReference type="KEGG" id="sth:STH1482"/>
<dbReference type="eggNOG" id="COG1206">
    <property type="taxonomic scope" value="Bacteria"/>
</dbReference>
<dbReference type="HOGENOM" id="CLU_033057_1_0_9"/>
<dbReference type="OrthoDB" id="9803114at2"/>
<dbReference type="Proteomes" id="UP000000417">
    <property type="component" value="Chromosome"/>
</dbReference>
<dbReference type="GO" id="GO:0005829">
    <property type="term" value="C:cytosol"/>
    <property type="evidence" value="ECO:0007669"/>
    <property type="project" value="TreeGrafter"/>
</dbReference>
<dbReference type="GO" id="GO:0050660">
    <property type="term" value="F:flavin adenine dinucleotide binding"/>
    <property type="evidence" value="ECO:0007669"/>
    <property type="project" value="UniProtKB-UniRule"/>
</dbReference>
<dbReference type="GO" id="GO:0047151">
    <property type="term" value="F:tRNA (uracil(54)-C5)-methyltransferase activity, 5,10-methylenetetrahydrofolate-dependent"/>
    <property type="evidence" value="ECO:0007669"/>
    <property type="project" value="UniProtKB-UniRule"/>
</dbReference>
<dbReference type="GO" id="GO:0030488">
    <property type="term" value="P:tRNA methylation"/>
    <property type="evidence" value="ECO:0007669"/>
    <property type="project" value="TreeGrafter"/>
</dbReference>
<dbReference type="GO" id="GO:0002098">
    <property type="term" value="P:tRNA wobble uridine modification"/>
    <property type="evidence" value="ECO:0007669"/>
    <property type="project" value="TreeGrafter"/>
</dbReference>
<dbReference type="Gene3D" id="3.50.50.60">
    <property type="entry name" value="FAD/NAD(P)-binding domain"/>
    <property type="match status" value="2"/>
</dbReference>
<dbReference type="HAMAP" id="MF_01037">
    <property type="entry name" value="TrmFO"/>
    <property type="match status" value="1"/>
</dbReference>
<dbReference type="InterPro" id="IPR036188">
    <property type="entry name" value="FAD/NAD-bd_sf"/>
</dbReference>
<dbReference type="InterPro" id="IPR002218">
    <property type="entry name" value="MnmG-rel"/>
</dbReference>
<dbReference type="InterPro" id="IPR020595">
    <property type="entry name" value="MnmG-rel_CS"/>
</dbReference>
<dbReference type="InterPro" id="IPR040131">
    <property type="entry name" value="MnmG_N"/>
</dbReference>
<dbReference type="InterPro" id="IPR004417">
    <property type="entry name" value="TrmFO"/>
</dbReference>
<dbReference type="NCBIfam" id="TIGR00137">
    <property type="entry name" value="gid_trmFO"/>
    <property type="match status" value="1"/>
</dbReference>
<dbReference type="NCBIfam" id="NF003739">
    <property type="entry name" value="PRK05335.1"/>
    <property type="match status" value="1"/>
</dbReference>
<dbReference type="PANTHER" id="PTHR11806">
    <property type="entry name" value="GLUCOSE INHIBITED DIVISION PROTEIN A"/>
    <property type="match status" value="1"/>
</dbReference>
<dbReference type="PANTHER" id="PTHR11806:SF2">
    <property type="entry name" value="METHYLENETETRAHYDROFOLATE--TRNA-(URACIL-5-)-METHYLTRANSFERASE TRMFO"/>
    <property type="match status" value="1"/>
</dbReference>
<dbReference type="Pfam" id="PF01134">
    <property type="entry name" value="GIDA"/>
    <property type="match status" value="1"/>
</dbReference>
<dbReference type="SUPFAM" id="SSF51905">
    <property type="entry name" value="FAD/NAD(P)-binding domain"/>
    <property type="match status" value="1"/>
</dbReference>
<dbReference type="PROSITE" id="PS01281">
    <property type="entry name" value="GIDA_2"/>
    <property type="match status" value="1"/>
</dbReference>
<evidence type="ECO:0000255" key="1">
    <source>
        <dbReference type="HAMAP-Rule" id="MF_01037"/>
    </source>
</evidence>